<comment type="function">
    <text evidence="1">Catalyzes the ATP-dependent amidation of deamido-NAD to form NAD. Uses ammonia as a nitrogen source.</text>
</comment>
<comment type="catalytic activity">
    <reaction evidence="1">
        <text>deamido-NAD(+) + NH4(+) + ATP = AMP + diphosphate + NAD(+) + H(+)</text>
        <dbReference type="Rhea" id="RHEA:21188"/>
        <dbReference type="ChEBI" id="CHEBI:15378"/>
        <dbReference type="ChEBI" id="CHEBI:28938"/>
        <dbReference type="ChEBI" id="CHEBI:30616"/>
        <dbReference type="ChEBI" id="CHEBI:33019"/>
        <dbReference type="ChEBI" id="CHEBI:57540"/>
        <dbReference type="ChEBI" id="CHEBI:58437"/>
        <dbReference type="ChEBI" id="CHEBI:456215"/>
        <dbReference type="EC" id="6.3.1.5"/>
    </reaction>
</comment>
<comment type="pathway">
    <text evidence="1">Cofactor biosynthesis; NAD(+) biosynthesis; NAD(+) from deamido-NAD(+) (ammonia route): step 1/1.</text>
</comment>
<comment type="subunit">
    <text evidence="1">Homodimer.</text>
</comment>
<comment type="similarity">
    <text evidence="1">Belongs to the NAD synthetase family.</text>
</comment>
<gene>
    <name evidence="1" type="primary">nadE</name>
    <name type="ordered locus">CT0560</name>
</gene>
<dbReference type="EC" id="6.3.1.5" evidence="1"/>
<dbReference type="EMBL" id="AE006470">
    <property type="protein sequence ID" value="AAM71802.1"/>
    <property type="molecule type" value="Genomic_DNA"/>
</dbReference>
<dbReference type="RefSeq" id="NP_661460.1">
    <property type="nucleotide sequence ID" value="NC_002932.3"/>
</dbReference>
<dbReference type="RefSeq" id="WP_010932247.1">
    <property type="nucleotide sequence ID" value="NC_002932.3"/>
</dbReference>
<dbReference type="SMR" id="Q8KEX2"/>
<dbReference type="STRING" id="194439.CT0560"/>
<dbReference type="EnsemblBacteria" id="AAM71802">
    <property type="protein sequence ID" value="AAM71802"/>
    <property type="gene ID" value="CT0560"/>
</dbReference>
<dbReference type="KEGG" id="cte:CT0560"/>
<dbReference type="PATRIC" id="fig|194439.7.peg.524"/>
<dbReference type="eggNOG" id="COG0171">
    <property type="taxonomic scope" value="Bacteria"/>
</dbReference>
<dbReference type="HOGENOM" id="CLU_059327_1_2_10"/>
<dbReference type="OrthoDB" id="9803818at2"/>
<dbReference type="UniPathway" id="UPA00253">
    <property type="reaction ID" value="UER00333"/>
</dbReference>
<dbReference type="Proteomes" id="UP000001007">
    <property type="component" value="Chromosome"/>
</dbReference>
<dbReference type="GO" id="GO:0005737">
    <property type="term" value="C:cytoplasm"/>
    <property type="evidence" value="ECO:0007669"/>
    <property type="project" value="InterPro"/>
</dbReference>
<dbReference type="GO" id="GO:0005524">
    <property type="term" value="F:ATP binding"/>
    <property type="evidence" value="ECO:0007669"/>
    <property type="project" value="UniProtKB-UniRule"/>
</dbReference>
<dbReference type="GO" id="GO:0004359">
    <property type="term" value="F:glutaminase activity"/>
    <property type="evidence" value="ECO:0007669"/>
    <property type="project" value="InterPro"/>
</dbReference>
<dbReference type="GO" id="GO:0046872">
    <property type="term" value="F:metal ion binding"/>
    <property type="evidence" value="ECO:0007669"/>
    <property type="project" value="UniProtKB-KW"/>
</dbReference>
<dbReference type="GO" id="GO:0003952">
    <property type="term" value="F:NAD+ synthase (glutamine-hydrolyzing) activity"/>
    <property type="evidence" value="ECO:0007669"/>
    <property type="project" value="InterPro"/>
</dbReference>
<dbReference type="GO" id="GO:0008795">
    <property type="term" value="F:NAD+ synthase activity"/>
    <property type="evidence" value="ECO:0007669"/>
    <property type="project" value="UniProtKB-UniRule"/>
</dbReference>
<dbReference type="GO" id="GO:0009435">
    <property type="term" value="P:NAD biosynthetic process"/>
    <property type="evidence" value="ECO:0007669"/>
    <property type="project" value="UniProtKB-UniRule"/>
</dbReference>
<dbReference type="CDD" id="cd00553">
    <property type="entry name" value="NAD_synthase"/>
    <property type="match status" value="1"/>
</dbReference>
<dbReference type="FunFam" id="3.40.50.620:FF:000106">
    <property type="entry name" value="Glutamine-dependent NAD(+) synthetase"/>
    <property type="match status" value="1"/>
</dbReference>
<dbReference type="Gene3D" id="3.40.50.620">
    <property type="entry name" value="HUPs"/>
    <property type="match status" value="1"/>
</dbReference>
<dbReference type="HAMAP" id="MF_00193">
    <property type="entry name" value="NadE_ammonia_dep"/>
    <property type="match status" value="1"/>
</dbReference>
<dbReference type="InterPro" id="IPR022310">
    <property type="entry name" value="NAD/GMP_synthase"/>
</dbReference>
<dbReference type="InterPro" id="IPR003694">
    <property type="entry name" value="NAD_synthase"/>
</dbReference>
<dbReference type="InterPro" id="IPR022926">
    <property type="entry name" value="NH(3)-dep_NAD(+)_synth"/>
</dbReference>
<dbReference type="InterPro" id="IPR014729">
    <property type="entry name" value="Rossmann-like_a/b/a_fold"/>
</dbReference>
<dbReference type="NCBIfam" id="TIGR00552">
    <property type="entry name" value="nadE"/>
    <property type="match status" value="1"/>
</dbReference>
<dbReference type="NCBIfam" id="NF010587">
    <property type="entry name" value="PRK13980.1"/>
    <property type="match status" value="1"/>
</dbReference>
<dbReference type="PANTHER" id="PTHR23090:SF9">
    <property type="entry name" value="GLUTAMINE-DEPENDENT NAD(+) SYNTHETASE"/>
    <property type="match status" value="1"/>
</dbReference>
<dbReference type="PANTHER" id="PTHR23090">
    <property type="entry name" value="NH 3 /GLUTAMINE-DEPENDENT NAD + SYNTHETASE"/>
    <property type="match status" value="1"/>
</dbReference>
<dbReference type="Pfam" id="PF02540">
    <property type="entry name" value="NAD_synthase"/>
    <property type="match status" value="1"/>
</dbReference>
<dbReference type="SUPFAM" id="SSF52402">
    <property type="entry name" value="Adenine nucleotide alpha hydrolases-like"/>
    <property type="match status" value="1"/>
</dbReference>
<sequence>MKPQNLHFDYGLVEAILVPFIRNEIRKFGFGSVVLGLSGGIDSAVVCELAVRALGVENVLALMMPYKTSSQESLDHAELMVDRLGIRYEIMPVTEVVDAFFATRPDASRLRRGNVMARSRMLCLYDVSARDGCLVLGTSNKTELMLGYGTMFGDMASAVNPIGDLYKTQIFGLARHLGIPAPLIDKPPSADLWEGQSDEADLGFSYEEVDQLLYMMLEERMDRDAILAEGIDSAFYQRVRSMVVRNQYKRMMPVIAKLSSRTPGIDFRYARDWQEVR</sequence>
<accession>Q8KEX2</accession>
<feature type="chain" id="PRO_0000152163" description="NH(3)-dependent NAD(+) synthetase">
    <location>
        <begin position="1"/>
        <end position="277"/>
    </location>
</feature>
<feature type="binding site" evidence="1">
    <location>
        <begin position="36"/>
        <end position="43"/>
    </location>
    <ligand>
        <name>ATP</name>
        <dbReference type="ChEBI" id="CHEBI:30616"/>
    </ligand>
</feature>
<feature type="binding site" evidence="1">
    <location>
        <position position="42"/>
    </location>
    <ligand>
        <name>Mg(2+)</name>
        <dbReference type="ChEBI" id="CHEBI:18420"/>
    </ligand>
</feature>
<feature type="binding site" evidence="1">
    <location>
        <position position="118"/>
    </location>
    <ligand>
        <name>deamido-NAD(+)</name>
        <dbReference type="ChEBI" id="CHEBI:58437"/>
    </ligand>
</feature>
<feature type="binding site" evidence="1">
    <location>
        <position position="138"/>
    </location>
    <ligand>
        <name>ATP</name>
        <dbReference type="ChEBI" id="CHEBI:30616"/>
    </ligand>
</feature>
<feature type="binding site" evidence="1">
    <location>
        <position position="143"/>
    </location>
    <ligand>
        <name>Mg(2+)</name>
        <dbReference type="ChEBI" id="CHEBI:18420"/>
    </ligand>
</feature>
<feature type="binding site" evidence="1">
    <location>
        <position position="167"/>
    </location>
    <ligand>
        <name>ATP</name>
        <dbReference type="ChEBI" id="CHEBI:30616"/>
    </ligand>
</feature>
<feature type="binding site" evidence="1">
    <location>
        <position position="189"/>
    </location>
    <ligand>
        <name>ATP</name>
        <dbReference type="ChEBI" id="CHEBI:30616"/>
    </ligand>
</feature>
<name>NADE_CHLTE</name>
<keyword id="KW-0067">ATP-binding</keyword>
<keyword id="KW-0436">Ligase</keyword>
<keyword id="KW-0460">Magnesium</keyword>
<keyword id="KW-0479">Metal-binding</keyword>
<keyword id="KW-0520">NAD</keyword>
<keyword id="KW-0547">Nucleotide-binding</keyword>
<keyword id="KW-1185">Reference proteome</keyword>
<protein>
    <recommendedName>
        <fullName evidence="1">NH(3)-dependent NAD(+) synthetase</fullName>
        <ecNumber evidence="1">6.3.1.5</ecNumber>
    </recommendedName>
</protein>
<reference key="1">
    <citation type="journal article" date="2002" name="Proc. Natl. Acad. Sci. U.S.A.">
        <title>The complete genome sequence of Chlorobium tepidum TLS, a photosynthetic, anaerobic, green-sulfur bacterium.</title>
        <authorList>
            <person name="Eisen J.A."/>
            <person name="Nelson K.E."/>
            <person name="Paulsen I.T."/>
            <person name="Heidelberg J.F."/>
            <person name="Wu M."/>
            <person name="Dodson R.J."/>
            <person name="DeBoy R.T."/>
            <person name="Gwinn M.L."/>
            <person name="Nelson W.C."/>
            <person name="Haft D.H."/>
            <person name="Hickey E.K."/>
            <person name="Peterson J.D."/>
            <person name="Durkin A.S."/>
            <person name="Kolonay J.F."/>
            <person name="Yang F."/>
            <person name="Holt I.E."/>
            <person name="Umayam L.A."/>
            <person name="Mason T.M."/>
            <person name="Brenner M."/>
            <person name="Shea T.P."/>
            <person name="Parksey D.S."/>
            <person name="Nierman W.C."/>
            <person name="Feldblyum T.V."/>
            <person name="Hansen C.L."/>
            <person name="Craven M.B."/>
            <person name="Radune D."/>
            <person name="Vamathevan J.J."/>
            <person name="Khouri H.M."/>
            <person name="White O."/>
            <person name="Gruber T.M."/>
            <person name="Ketchum K.A."/>
            <person name="Venter J.C."/>
            <person name="Tettelin H."/>
            <person name="Bryant D.A."/>
            <person name="Fraser C.M."/>
        </authorList>
    </citation>
    <scope>NUCLEOTIDE SEQUENCE [LARGE SCALE GENOMIC DNA]</scope>
    <source>
        <strain>ATCC 49652 / DSM 12025 / NBRC 103806 / TLS</strain>
    </source>
</reference>
<evidence type="ECO:0000255" key="1">
    <source>
        <dbReference type="HAMAP-Rule" id="MF_00193"/>
    </source>
</evidence>
<proteinExistence type="inferred from homology"/>
<organism>
    <name type="scientific">Chlorobaculum tepidum (strain ATCC 49652 / DSM 12025 / NBRC 103806 / TLS)</name>
    <name type="common">Chlorobium tepidum</name>
    <dbReference type="NCBI Taxonomy" id="194439"/>
    <lineage>
        <taxon>Bacteria</taxon>
        <taxon>Pseudomonadati</taxon>
        <taxon>Chlorobiota</taxon>
        <taxon>Chlorobiia</taxon>
        <taxon>Chlorobiales</taxon>
        <taxon>Chlorobiaceae</taxon>
        <taxon>Chlorobaculum</taxon>
    </lineage>
</organism>